<keyword id="KW-0067">ATP-binding</keyword>
<keyword id="KW-0158">Chromosome</keyword>
<keyword id="KW-0469">Meiosis</keyword>
<keyword id="KW-0547">Nucleotide-binding</keyword>
<keyword id="KW-1185">Reference proteome</keyword>
<protein>
    <recommendedName>
        <fullName evidence="4">Pachytene checkpoint protein 2 homolog</fullName>
        <shortName evidence="3">AtPCH2</shortName>
    </recommendedName>
</protein>
<gene>
    <name evidence="3" type="primary">PCH2</name>
    <name type="ordered locus">At4g24710</name>
    <name type="ORF">F22K18.90</name>
</gene>
<name>PCH2_ARATH</name>
<comment type="function">
    <text evidence="2">Plays a key role in chromosome recombination during meiosis. Mediates meiotic chromosome remodeling and crossover maturation.</text>
</comment>
<comment type="subcellular location">
    <subcellularLocation>
        <location evidence="2">Chromosome</location>
    </subcellularLocation>
    <text evidence="2">Localizes to the sites of chromosome axis remodeling.</text>
</comment>
<comment type="disruption phenotype">
    <text evidence="2">Reduced fertility. Reduced number of seeds.</text>
</comment>
<comment type="similarity">
    <text evidence="4">Belongs to the AAA ATPase family. PCH2 subfamily.</text>
</comment>
<comment type="sequence caution" evidence="4">
    <conflict type="erroneous gene model prediction">
        <sequence resource="EMBL-CDS" id="CAA22992"/>
    </conflict>
</comment>
<comment type="sequence caution" evidence="4">
    <conflict type="erroneous gene model prediction">
        <sequence resource="EMBL-CDS" id="CAB79381"/>
    </conflict>
</comment>
<accession>Q8H1F9</accession>
<accession>F4JR10</accession>
<accession>Q67ZT1</accession>
<accession>Q9SB66</accession>
<reference key="1">
    <citation type="journal article" date="1999" name="Nature">
        <title>Sequence and analysis of chromosome 4 of the plant Arabidopsis thaliana.</title>
        <authorList>
            <person name="Mayer K.F.X."/>
            <person name="Schueller C."/>
            <person name="Wambutt R."/>
            <person name="Murphy G."/>
            <person name="Volckaert G."/>
            <person name="Pohl T."/>
            <person name="Duesterhoeft A."/>
            <person name="Stiekema W."/>
            <person name="Entian K.-D."/>
            <person name="Terryn N."/>
            <person name="Harris B."/>
            <person name="Ansorge W."/>
            <person name="Brandt P."/>
            <person name="Grivell L.A."/>
            <person name="Rieger M."/>
            <person name="Weichselgartner M."/>
            <person name="de Simone V."/>
            <person name="Obermaier B."/>
            <person name="Mache R."/>
            <person name="Mueller M."/>
            <person name="Kreis M."/>
            <person name="Delseny M."/>
            <person name="Puigdomenech P."/>
            <person name="Watson M."/>
            <person name="Schmidtheini T."/>
            <person name="Reichert B."/>
            <person name="Portetelle D."/>
            <person name="Perez-Alonso M."/>
            <person name="Boutry M."/>
            <person name="Bancroft I."/>
            <person name="Vos P."/>
            <person name="Hoheisel J."/>
            <person name="Zimmermann W."/>
            <person name="Wedler H."/>
            <person name="Ridley P."/>
            <person name="Langham S.-A."/>
            <person name="McCullagh B."/>
            <person name="Bilham L."/>
            <person name="Robben J."/>
            <person name="van der Schueren J."/>
            <person name="Grymonprez B."/>
            <person name="Chuang Y.-J."/>
            <person name="Vandenbussche F."/>
            <person name="Braeken M."/>
            <person name="Weltjens I."/>
            <person name="Voet M."/>
            <person name="Bastiaens I."/>
            <person name="Aert R."/>
            <person name="Defoor E."/>
            <person name="Weitzenegger T."/>
            <person name="Bothe G."/>
            <person name="Ramsperger U."/>
            <person name="Hilbert H."/>
            <person name="Braun M."/>
            <person name="Holzer E."/>
            <person name="Brandt A."/>
            <person name="Peters S."/>
            <person name="van Staveren M."/>
            <person name="Dirkse W."/>
            <person name="Mooijman P."/>
            <person name="Klein Lankhorst R."/>
            <person name="Rose M."/>
            <person name="Hauf J."/>
            <person name="Koetter P."/>
            <person name="Berneiser S."/>
            <person name="Hempel S."/>
            <person name="Feldpausch M."/>
            <person name="Lamberth S."/>
            <person name="Van den Daele H."/>
            <person name="De Keyser A."/>
            <person name="Buysshaert C."/>
            <person name="Gielen J."/>
            <person name="Villarroel R."/>
            <person name="De Clercq R."/>
            <person name="van Montagu M."/>
            <person name="Rogers J."/>
            <person name="Cronin A."/>
            <person name="Quail M.A."/>
            <person name="Bray-Allen S."/>
            <person name="Clark L."/>
            <person name="Doggett J."/>
            <person name="Hall S."/>
            <person name="Kay M."/>
            <person name="Lennard N."/>
            <person name="McLay K."/>
            <person name="Mayes R."/>
            <person name="Pettett A."/>
            <person name="Rajandream M.A."/>
            <person name="Lyne M."/>
            <person name="Benes V."/>
            <person name="Rechmann S."/>
            <person name="Borkova D."/>
            <person name="Bloecker H."/>
            <person name="Scharfe M."/>
            <person name="Grimm M."/>
            <person name="Loehnert T.-H."/>
            <person name="Dose S."/>
            <person name="de Haan M."/>
            <person name="Maarse A.C."/>
            <person name="Schaefer M."/>
            <person name="Mueller-Auer S."/>
            <person name="Gabel C."/>
            <person name="Fuchs M."/>
            <person name="Fartmann B."/>
            <person name="Granderath K."/>
            <person name="Dauner D."/>
            <person name="Herzl A."/>
            <person name="Neumann S."/>
            <person name="Argiriou A."/>
            <person name="Vitale D."/>
            <person name="Liguori R."/>
            <person name="Piravandi E."/>
            <person name="Massenet O."/>
            <person name="Quigley F."/>
            <person name="Clabauld G."/>
            <person name="Muendlein A."/>
            <person name="Felber R."/>
            <person name="Schnabl S."/>
            <person name="Hiller R."/>
            <person name="Schmidt W."/>
            <person name="Lecharny A."/>
            <person name="Aubourg S."/>
            <person name="Chefdor F."/>
            <person name="Cooke R."/>
            <person name="Berger C."/>
            <person name="Monfort A."/>
            <person name="Casacuberta E."/>
            <person name="Gibbons T."/>
            <person name="Weber N."/>
            <person name="Vandenbol M."/>
            <person name="Bargues M."/>
            <person name="Terol J."/>
            <person name="Torres A."/>
            <person name="Perez-Perez A."/>
            <person name="Purnelle B."/>
            <person name="Bent E."/>
            <person name="Johnson S."/>
            <person name="Tacon D."/>
            <person name="Jesse T."/>
            <person name="Heijnen L."/>
            <person name="Schwarz S."/>
            <person name="Scholler P."/>
            <person name="Heber S."/>
            <person name="Francs P."/>
            <person name="Bielke C."/>
            <person name="Frishman D."/>
            <person name="Haase D."/>
            <person name="Lemcke K."/>
            <person name="Mewes H.-W."/>
            <person name="Stocker S."/>
            <person name="Zaccaria P."/>
            <person name="Bevan M."/>
            <person name="Wilson R.K."/>
            <person name="de la Bastide M."/>
            <person name="Habermann K."/>
            <person name="Parnell L."/>
            <person name="Dedhia N."/>
            <person name="Gnoj L."/>
            <person name="Schutz K."/>
            <person name="Huang E."/>
            <person name="Spiegel L."/>
            <person name="Sekhon M."/>
            <person name="Murray J."/>
            <person name="Sheet P."/>
            <person name="Cordes M."/>
            <person name="Abu-Threideh J."/>
            <person name="Stoneking T."/>
            <person name="Kalicki J."/>
            <person name="Graves T."/>
            <person name="Harmon G."/>
            <person name="Edwards J."/>
            <person name="Latreille P."/>
            <person name="Courtney L."/>
            <person name="Cloud J."/>
            <person name="Abbott A."/>
            <person name="Scott K."/>
            <person name="Johnson D."/>
            <person name="Minx P."/>
            <person name="Bentley D."/>
            <person name="Fulton B."/>
            <person name="Miller N."/>
            <person name="Greco T."/>
            <person name="Kemp K."/>
            <person name="Kramer J."/>
            <person name="Fulton L."/>
            <person name="Mardis E."/>
            <person name="Dante M."/>
            <person name="Pepin K."/>
            <person name="Hillier L.W."/>
            <person name="Nelson J."/>
            <person name="Spieth J."/>
            <person name="Ryan E."/>
            <person name="Andrews S."/>
            <person name="Geisel C."/>
            <person name="Layman D."/>
            <person name="Du H."/>
            <person name="Ali J."/>
            <person name="Berghoff A."/>
            <person name="Jones K."/>
            <person name="Drone K."/>
            <person name="Cotton M."/>
            <person name="Joshu C."/>
            <person name="Antonoiu B."/>
            <person name="Zidanic M."/>
            <person name="Strong C."/>
            <person name="Sun H."/>
            <person name="Lamar B."/>
            <person name="Yordan C."/>
            <person name="Ma P."/>
            <person name="Zhong J."/>
            <person name="Preston R."/>
            <person name="Vil D."/>
            <person name="Shekher M."/>
            <person name="Matero A."/>
            <person name="Shah R."/>
            <person name="Swaby I.K."/>
            <person name="O'Shaughnessy A."/>
            <person name="Rodriguez M."/>
            <person name="Hoffman J."/>
            <person name="Till S."/>
            <person name="Granat S."/>
            <person name="Shohdy N."/>
            <person name="Hasegawa A."/>
            <person name="Hameed A."/>
            <person name="Lodhi M."/>
            <person name="Johnson A."/>
            <person name="Chen E."/>
            <person name="Marra M.A."/>
            <person name="Martienssen R."/>
            <person name="McCombie W.R."/>
        </authorList>
    </citation>
    <scope>NUCLEOTIDE SEQUENCE [LARGE SCALE GENOMIC DNA]</scope>
    <source>
        <strain>cv. Columbia</strain>
    </source>
</reference>
<reference key="2">
    <citation type="journal article" date="2017" name="Plant J.">
        <title>Araport11: a complete reannotation of the Arabidopsis thaliana reference genome.</title>
        <authorList>
            <person name="Cheng C.Y."/>
            <person name="Krishnakumar V."/>
            <person name="Chan A.P."/>
            <person name="Thibaud-Nissen F."/>
            <person name="Schobel S."/>
            <person name="Town C.D."/>
        </authorList>
    </citation>
    <scope>GENOME REANNOTATION</scope>
    <source>
        <strain>cv. Columbia</strain>
    </source>
</reference>
<reference key="3">
    <citation type="journal article" date="2003" name="Science">
        <title>Empirical analysis of transcriptional activity in the Arabidopsis genome.</title>
        <authorList>
            <person name="Yamada K."/>
            <person name="Lim J."/>
            <person name="Dale J.M."/>
            <person name="Chen H."/>
            <person name="Shinn P."/>
            <person name="Palm C.J."/>
            <person name="Southwick A.M."/>
            <person name="Wu H.C."/>
            <person name="Kim C.J."/>
            <person name="Nguyen M."/>
            <person name="Pham P.K."/>
            <person name="Cheuk R.F."/>
            <person name="Karlin-Newmann G."/>
            <person name="Liu S.X."/>
            <person name="Lam B."/>
            <person name="Sakano H."/>
            <person name="Wu T."/>
            <person name="Yu G."/>
            <person name="Miranda M."/>
            <person name="Quach H.L."/>
            <person name="Tripp M."/>
            <person name="Chang C.H."/>
            <person name="Lee J.M."/>
            <person name="Toriumi M.J."/>
            <person name="Chan M.M."/>
            <person name="Tang C.C."/>
            <person name="Onodera C.S."/>
            <person name="Deng J.M."/>
            <person name="Akiyama K."/>
            <person name="Ansari Y."/>
            <person name="Arakawa T."/>
            <person name="Banh J."/>
            <person name="Banno F."/>
            <person name="Bowser L."/>
            <person name="Brooks S.Y."/>
            <person name="Carninci P."/>
            <person name="Chao Q."/>
            <person name="Choy N."/>
            <person name="Enju A."/>
            <person name="Goldsmith A.D."/>
            <person name="Gurjal M."/>
            <person name="Hansen N.F."/>
            <person name="Hayashizaki Y."/>
            <person name="Johnson-Hopson C."/>
            <person name="Hsuan V.W."/>
            <person name="Iida K."/>
            <person name="Karnes M."/>
            <person name="Khan S."/>
            <person name="Koesema E."/>
            <person name="Ishida J."/>
            <person name="Jiang P.X."/>
            <person name="Jones T."/>
            <person name="Kawai J."/>
            <person name="Kamiya A."/>
            <person name="Meyers C."/>
            <person name="Nakajima M."/>
            <person name="Narusaka M."/>
            <person name="Seki M."/>
            <person name="Sakurai T."/>
            <person name="Satou M."/>
            <person name="Tamse R."/>
            <person name="Vaysberg M."/>
            <person name="Wallender E.K."/>
            <person name="Wong C."/>
            <person name="Yamamura Y."/>
            <person name="Yuan S."/>
            <person name="Shinozaki K."/>
            <person name="Davis R.W."/>
            <person name="Theologis A."/>
            <person name="Ecker J.R."/>
        </authorList>
    </citation>
    <scope>NUCLEOTIDE SEQUENCE [LARGE SCALE MRNA]</scope>
    <source>
        <strain>cv. Columbia</strain>
    </source>
</reference>
<reference key="4">
    <citation type="submission" date="2004-09" db="EMBL/GenBank/DDBJ databases">
        <title>Large-scale analysis of RIKEN Arabidopsis full-length (RAFL) cDNAs.</title>
        <authorList>
            <person name="Totoki Y."/>
            <person name="Seki M."/>
            <person name="Ishida J."/>
            <person name="Nakajima M."/>
            <person name="Enju A."/>
            <person name="Kamiya A."/>
            <person name="Narusaka M."/>
            <person name="Shin-i T."/>
            <person name="Nakagawa M."/>
            <person name="Sakamoto N."/>
            <person name="Oishi K."/>
            <person name="Kohara Y."/>
            <person name="Kobayashi M."/>
            <person name="Toyoda A."/>
            <person name="Sakaki Y."/>
            <person name="Sakurai T."/>
            <person name="Iida K."/>
            <person name="Akiyama K."/>
            <person name="Satou M."/>
            <person name="Toyoda T."/>
            <person name="Konagaya A."/>
            <person name="Carninci P."/>
            <person name="Kawai J."/>
            <person name="Hayashizaki Y."/>
            <person name="Shinozaki K."/>
        </authorList>
    </citation>
    <scope>NUCLEOTIDE SEQUENCE [LARGE SCALE MRNA] OF 105-467</scope>
    <source>
        <strain>cv. Columbia</strain>
    </source>
</reference>
<reference key="5">
    <citation type="journal article" date="2015" name="PLoS Genet.">
        <title>Arabidopsis PCH2 mediates meiotic chromosome remodeling and maturation of crossovers.</title>
        <authorList>
            <person name="Lambing C."/>
            <person name="Osman K."/>
            <person name="Nuntasoontorn K."/>
            <person name="West A."/>
            <person name="Higgins J.D."/>
            <person name="Copenhaver G.P."/>
            <person name="Yang J."/>
            <person name="Armstrong S.J."/>
            <person name="Mechtler K."/>
            <person name="Roitinger E."/>
            <person name="Franklin F.C."/>
        </authorList>
    </citation>
    <scope>FUNCTION</scope>
    <scope>SUBCELLULAR LOCATION</scope>
    <scope>DISRUPTION PHENOTYPE</scope>
</reference>
<dbReference type="EMBL" id="AL035356">
    <property type="protein sequence ID" value="CAA22992.1"/>
    <property type="status" value="ALT_SEQ"/>
    <property type="molecule type" value="Genomic_DNA"/>
</dbReference>
<dbReference type="EMBL" id="AL161562">
    <property type="protein sequence ID" value="CAB79381.1"/>
    <property type="status" value="ALT_SEQ"/>
    <property type="molecule type" value="Genomic_DNA"/>
</dbReference>
<dbReference type="EMBL" id="CP002687">
    <property type="protein sequence ID" value="AEE84945.2"/>
    <property type="molecule type" value="Genomic_DNA"/>
</dbReference>
<dbReference type="EMBL" id="AY150398">
    <property type="protein sequence ID" value="AAN12943.1"/>
    <property type="molecule type" value="mRNA"/>
</dbReference>
<dbReference type="EMBL" id="AK176036">
    <property type="protein sequence ID" value="BAD43799.1"/>
    <property type="molecule type" value="mRNA"/>
</dbReference>
<dbReference type="PIR" id="T05563">
    <property type="entry name" value="T05563"/>
</dbReference>
<dbReference type="RefSeq" id="NP_001320058.1">
    <property type="nucleotide sequence ID" value="NM_001341695.1"/>
</dbReference>
<dbReference type="SMR" id="Q8H1F9"/>
<dbReference type="BioGRID" id="13862">
    <property type="interactions" value="1"/>
</dbReference>
<dbReference type="FunCoup" id="Q8H1F9">
    <property type="interactions" value="2487"/>
</dbReference>
<dbReference type="IntAct" id="Q8H1F9">
    <property type="interactions" value="2"/>
</dbReference>
<dbReference type="STRING" id="3702.Q8H1F9"/>
<dbReference type="PaxDb" id="3702-AT4G24710.1"/>
<dbReference type="EnsemblPlants" id="AT4G24710.1">
    <property type="protein sequence ID" value="AT4G24710.1"/>
    <property type="gene ID" value="AT4G24710"/>
</dbReference>
<dbReference type="GeneID" id="828573"/>
<dbReference type="Gramene" id="AT4G24710.1">
    <property type="protein sequence ID" value="AT4G24710.1"/>
    <property type="gene ID" value="AT4G24710"/>
</dbReference>
<dbReference type="KEGG" id="ath:AT4G24710"/>
<dbReference type="Araport" id="AT4G24710"/>
<dbReference type="TAIR" id="AT4G24710">
    <property type="gene designation" value="PCH2"/>
</dbReference>
<dbReference type="eggNOG" id="KOG0744">
    <property type="taxonomic scope" value="Eukaryota"/>
</dbReference>
<dbReference type="HOGENOM" id="CLU_028208_0_1_1"/>
<dbReference type="InParanoid" id="Q8H1F9"/>
<dbReference type="OMA" id="NVCDSVQ"/>
<dbReference type="OrthoDB" id="10042665at2759"/>
<dbReference type="PhylomeDB" id="Q8H1F9"/>
<dbReference type="PRO" id="PR:Q8H1F9"/>
<dbReference type="Proteomes" id="UP000006548">
    <property type="component" value="Chromosome 4"/>
</dbReference>
<dbReference type="ExpressionAtlas" id="Q8H1F9">
    <property type="expression patterns" value="baseline and differential"/>
</dbReference>
<dbReference type="GO" id="GO:0005694">
    <property type="term" value="C:chromosome"/>
    <property type="evidence" value="ECO:0000314"/>
    <property type="project" value="UniProtKB"/>
</dbReference>
<dbReference type="GO" id="GO:0005524">
    <property type="term" value="F:ATP binding"/>
    <property type="evidence" value="ECO:0007669"/>
    <property type="project" value="UniProtKB-KW"/>
</dbReference>
<dbReference type="GO" id="GO:0016887">
    <property type="term" value="F:ATP hydrolysis activity"/>
    <property type="evidence" value="ECO:0007669"/>
    <property type="project" value="InterPro"/>
</dbReference>
<dbReference type="GO" id="GO:0007129">
    <property type="term" value="P:homologous chromosome pairing at meiosis"/>
    <property type="evidence" value="ECO:0000315"/>
    <property type="project" value="UniProtKB"/>
</dbReference>
<dbReference type="CDD" id="cd19508">
    <property type="entry name" value="RecA-like_Pch2-like"/>
    <property type="match status" value="1"/>
</dbReference>
<dbReference type="FunFam" id="3.40.50.300:FF:000680">
    <property type="entry name" value="pachytene checkpoint protein 2 homolog"/>
    <property type="match status" value="1"/>
</dbReference>
<dbReference type="Gene3D" id="3.40.50.300">
    <property type="entry name" value="P-loop containing nucleotide triphosphate hydrolases"/>
    <property type="match status" value="1"/>
</dbReference>
<dbReference type="InterPro" id="IPR003593">
    <property type="entry name" value="AAA+_ATPase"/>
</dbReference>
<dbReference type="InterPro" id="IPR003959">
    <property type="entry name" value="ATPase_AAA_core"/>
</dbReference>
<dbReference type="InterPro" id="IPR003960">
    <property type="entry name" value="ATPase_AAA_CS"/>
</dbReference>
<dbReference type="InterPro" id="IPR001270">
    <property type="entry name" value="ClpA/B"/>
</dbReference>
<dbReference type="InterPro" id="IPR027417">
    <property type="entry name" value="P-loop_NTPase"/>
</dbReference>
<dbReference type="InterPro" id="IPR044539">
    <property type="entry name" value="Pch2-like"/>
</dbReference>
<dbReference type="PANTHER" id="PTHR45991">
    <property type="entry name" value="PACHYTENE CHECKPOINT PROTEIN 2"/>
    <property type="match status" value="1"/>
</dbReference>
<dbReference type="PANTHER" id="PTHR45991:SF1">
    <property type="entry name" value="PACHYTENE CHECKPOINT PROTEIN 2 HOMOLOG"/>
    <property type="match status" value="1"/>
</dbReference>
<dbReference type="Pfam" id="PF00004">
    <property type="entry name" value="AAA"/>
    <property type="match status" value="1"/>
</dbReference>
<dbReference type="Pfam" id="PF23242">
    <property type="entry name" value="AAA_lid_TRIP13_C"/>
    <property type="match status" value="1"/>
</dbReference>
<dbReference type="Pfam" id="PF23563">
    <property type="entry name" value="TRIP13_N"/>
    <property type="match status" value="1"/>
</dbReference>
<dbReference type="PRINTS" id="PR00300">
    <property type="entry name" value="CLPPROTEASEA"/>
</dbReference>
<dbReference type="SMART" id="SM00382">
    <property type="entry name" value="AAA"/>
    <property type="match status" value="1"/>
</dbReference>
<dbReference type="SUPFAM" id="SSF52540">
    <property type="entry name" value="P-loop containing nucleoside triphosphate hydrolases"/>
    <property type="match status" value="1"/>
</dbReference>
<dbReference type="PROSITE" id="PS00674">
    <property type="entry name" value="AAA"/>
    <property type="match status" value="1"/>
</dbReference>
<organism>
    <name type="scientific">Arabidopsis thaliana</name>
    <name type="common">Mouse-ear cress</name>
    <dbReference type="NCBI Taxonomy" id="3702"/>
    <lineage>
        <taxon>Eukaryota</taxon>
        <taxon>Viridiplantae</taxon>
        <taxon>Streptophyta</taxon>
        <taxon>Embryophyta</taxon>
        <taxon>Tracheophyta</taxon>
        <taxon>Spermatophyta</taxon>
        <taxon>Magnoliopsida</taxon>
        <taxon>eudicotyledons</taxon>
        <taxon>Gunneridae</taxon>
        <taxon>Pentapetalae</taxon>
        <taxon>rosids</taxon>
        <taxon>malvids</taxon>
        <taxon>Brassicales</taxon>
        <taxon>Brassicaceae</taxon>
        <taxon>Camelineae</taxon>
        <taxon>Arabidopsis</taxon>
    </lineage>
</organism>
<evidence type="ECO:0000255" key="1"/>
<evidence type="ECO:0000269" key="2">
    <source>
    </source>
</evidence>
<evidence type="ECO:0000303" key="3">
    <source>
    </source>
</evidence>
<evidence type="ECO:0000305" key="4"/>
<sequence length="467" mass="51704">MVEDPIPLPNASMEVSYQNPIEAATIPVQIAVAEPVATPNPPPCLHENKFLVSVEVCLKPSSTARLEDVQRAVERMLENRSMSYADGLVLIPADDLFLVDNVQRICICDTEEWVKNNDVLLFWQVKPVVHTFQLIEEGPCEDLCADGQPASFNEWILPAKEFDGLWESLIYESGLKQRLLRYAASALLFTQKGVNPNLVSWNRIILLHGPPGTGKTSLCKALAQKLSIRCNSRYPHCQLIEVNAHSLFSKWFSESGKLVAKLFQKIQEMVEEDGNLVFVLIDEVESLAAARKAALSGSEPSDSIRVVNALLTQMDKLKSAPNVIILTTSNITTAIDVAFVDRADIKAYVGPPTLHVRYEILRSCVEELISKGIISSFQGCDGLSIPSFSSLKEKLSESEVHDTNTVPWFCKQLIEAAKGCEGLSGRSLRKLPFLAHAALADPYSHDPSNFLCTMIETAKREKSEQPE</sequence>
<feature type="chain" id="PRO_0000410926" description="Pachytene checkpoint protein 2 homolog">
    <location>
        <begin position="1"/>
        <end position="467"/>
    </location>
</feature>
<feature type="binding site" evidence="1">
    <location>
        <begin position="209"/>
        <end position="216"/>
    </location>
    <ligand>
        <name>ATP</name>
        <dbReference type="ChEBI" id="CHEBI:30616"/>
    </ligand>
</feature>
<proteinExistence type="evidence at transcript level"/>